<accession>O70441</accession>
<gene>
    <name type="primary">Syn3</name>
</gene>
<sequence length="579" mass="63349">MNFLRRRLSDSSFVANLPNGYMPDLQRPESSSSSPASPATERRHPQPLAASFSSPGSSLFSSFSSAMKQTPQAPTGLMEPPTPVTPVVQRPRILLVIDDAHTDWSKYFHGKKVNGDIEIRVEQAEFSELNLAAYVTGGCMVDMQVVRNGTKIVRSFKPDFILVRQHAYSMALAEDYRSLVIGLQYGGLPAVNSLYSVYNFCSKPWVFSQLIKIFHSLGPEKFPLVEQTFFPNHKPMLTAPNFPVVIKLGHAHAGMGKIKVENQHDYQDITSVVAMAKTYATTEAFIDSKYDIRIQKIGSNYKAYMRTSISGNWKANTGSAMLEQVAMTERYRLWVDSCSEMFGGLDICAVKAVHSKNGRDYIIEVMDSSMPLIGEHVEEDKQLMADLVVSKMSQLLVPGASVPSPLRPWGPQTKSAKSPGQGQLGPLLGQPQPRPPPQGGPRQAQSPQPPRSRSPSQQRLSPQGQQPVSPQSGSPQQQRSPGSPQLSRASGGSSPNQASKPTASLSSHTRPPVQGRSTSQQGEEPQKTASPHPHLNKSQSLTNSLSTSDTSHRGTPSEDEAKAETIRNLRKSFASLFSD</sequence>
<dbReference type="EMBL" id="AF056704">
    <property type="protein sequence ID" value="AAC24521.1"/>
    <property type="molecule type" value="mRNA"/>
</dbReference>
<dbReference type="RefSeq" id="NP_058805.1">
    <property type="nucleotide sequence ID" value="NM_017109.2"/>
</dbReference>
<dbReference type="RefSeq" id="XP_063119172.1">
    <property type="nucleotide sequence ID" value="XM_063263102.1"/>
</dbReference>
<dbReference type="RefSeq" id="XP_063119173.1">
    <property type="nucleotide sequence ID" value="XM_063263103.1"/>
</dbReference>
<dbReference type="RefSeq" id="XP_063119174.1">
    <property type="nucleotide sequence ID" value="XM_063263104.1"/>
</dbReference>
<dbReference type="RefSeq" id="XP_063119175.1">
    <property type="nucleotide sequence ID" value="XM_063263105.1"/>
</dbReference>
<dbReference type="SMR" id="O70441"/>
<dbReference type="DIP" id="DIP-358N"/>
<dbReference type="FunCoup" id="O70441">
    <property type="interactions" value="1414"/>
</dbReference>
<dbReference type="MINT" id="O70441"/>
<dbReference type="STRING" id="10116.ENSRNOP00000036740"/>
<dbReference type="GlyGen" id="O70441">
    <property type="glycosylation" value="1 site"/>
</dbReference>
<dbReference type="iPTMnet" id="O70441"/>
<dbReference type="PhosphoSitePlus" id="O70441"/>
<dbReference type="PaxDb" id="10116-ENSRNOP00000036740"/>
<dbReference type="ABCD" id="O70441">
    <property type="antibodies" value="2 sequenced antibodies"/>
</dbReference>
<dbReference type="Ensembl" id="ENSRNOT00000037918.6">
    <property type="protein sequence ID" value="ENSRNOP00000036740.6"/>
    <property type="gene ID" value="ENSRNOG00000026866.7"/>
</dbReference>
<dbReference type="GeneID" id="29130"/>
<dbReference type="KEGG" id="rno:29130"/>
<dbReference type="UCSC" id="RGD:3799">
    <property type="organism name" value="rat"/>
</dbReference>
<dbReference type="AGR" id="RGD:3799"/>
<dbReference type="CTD" id="8224"/>
<dbReference type="RGD" id="3799">
    <property type="gene designation" value="Syn3"/>
</dbReference>
<dbReference type="eggNOG" id="KOG3895">
    <property type="taxonomic scope" value="Eukaryota"/>
</dbReference>
<dbReference type="GeneTree" id="ENSGT00940000155415"/>
<dbReference type="InParanoid" id="O70441"/>
<dbReference type="OMA" id="IGSAYKC"/>
<dbReference type="OrthoDB" id="10249572at2759"/>
<dbReference type="PhylomeDB" id="O70441"/>
<dbReference type="TreeFam" id="TF319919"/>
<dbReference type="Reactome" id="R-RNO-181429">
    <property type="pathway name" value="Serotonin Neurotransmitter Release Cycle"/>
</dbReference>
<dbReference type="Reactome" id="R-RNO-212676">
    <property type="pathway name" value="Dopamine Neurotransmitter Release Cycle"/>
</dbReference>
<dbReference type="PRO" id="PR:O70441"/>
<dbReference type="Proteomes" id="UP000002494">
    <property type="component" value="Chromosome 7"/>
</dbReference>
<dbReference type="GO" id="GO:0098850">
    <property type="term" value="C:extrinsic component of synaptic vesicle membrane"/>
    <property type="evidence" value="ECO:0000314"/>
    <property type="project" value="SynGO"/>
</dbReference>
<dbReference type="GO" id="GO:0098978">
    <property type="term" value="C:glutamatergic synapse"/>
    <property type="evidence" value="ECO:0000266"/>
    <property type="project" value="RGD"/>
</dbReference>
<dbReference type="GO" id="GO:0014069">
    <property type="term" value="C:postsynaptic density"/>
    <property type="evidence" value="ECO:0000266"/>
    <property type="project" value="RGD"/>
</dbReference>
<dbReference type="GO" id="GO:0045202">
    <property type="term" value="C:synapse"/>
    <property type="evidence" value="ECO:0000266"/>
    <property type="project" value="RGD"/>
</dbReference>
<dbReference type="GO" id="GO:0008021">
    <property type="term" value="C:synaptic vesicle"/>
    <property type="evidence" value="ECO:0000314"/>
    <property type="project" value="UniProtKB"/>
</dbReference>
<dbReference type="GO" id="GO:0030672">
    <property type="term" value="C:synaptic vesicle membrane"/>
    <property type="evidence" value="ECO:0000266"/>
    <property type="project" value="RGD"/>
</dbReference>
<dbReference type="GO" id="GO:0005524">
    <property type="term" value="F:ATP binding"/>
    <property type="evidence" value="ECO:0000314"/>
    <property type="project" value="RGD"/>
</dbReference>
<dbReference type="GO" id="GO:0007269">
    <property type="term" value="P:neurotransmitter secretion"/>
    <property type="evidence" value="ECO:0000304"/>
    <property type="project" value="RGD"/>
</dbReference>
<dbReference type="GO" id="GO:0050808">
    <property type="term" value="P:synapse organization"/>
    <property type="evidence" value="ECO:0000318"/>
    <property type="project" value="GO_Central"/>
</dbReference>
<dbReference type="GO" id="GO:0097091">
    <property type="term" value="P:synaptic vesicle clustering"/>
    <property type="evidence" value="ECO:0000266"/>
    <property type="project" value="RGD"/>
</dbReference>
<dbReference type="GO" id="GO:0099504">
    <property type="term" value="P:synaptic vesicle cycle"/>
    <property type="evidence" value="ECO:0000266"/>
    <property type="project" value="RGD"/>
</dbReference>
<dbReference type="FunFam" id="3.30.1490.20:FF:000008">
    <property type="entry name" value="Synapsin I"/>
    <property type="match status" value="1"/>
</dbReference>
<dbReference type="FunFam" id="3.30.470.20:FF:000042">
    <property type="entry name" value="Synapsin III"/>
    <property type="match status" value="1"/>
</dbReference>
<dbReference type="FunFam" id="3.40.50.20:FF:000008">
    <property type="entry name" value="Synapsin III"/>
    <property type="match status" value="1"/>
</dbReference>
<dbReference type="Gene3D" id="3.40.50.20">
    <property type="match status" value="1"/>
</dbReference>
<dbReference type="Gene3D" id="3.30.1490.20">
    <property type="entry name" value="ATP-grasp fold, A domain"/>
    <property type="match status" value="1"/>
</dbReference>
<dbReference type="Gene3D" id="3.30.470.20">
    <property type="entry name" value="ATP-grasp fold, B domain"/>
    <property type="match status" value="1"/>
</dbReference>
<dbReference type="InterPro" id="IPR013815">
    <property type="entry name" value="ATP_grasp_subdomain_1"/>
</dbReference>
<dbReference type="InterPro" id="IPR016185">
    <property type="entry name" value="PreATP-grasp_dom_sf"/>
</dbReference>
<dbReference type="InterPro" id="IPR001359">
    <property type="entry name" value="Synapsin"/>
</dbReference>
<dbReference type="InterPro" id="IPR020898">
    <property type="entry name" value="Synapsin_ATP-bd_dom"/>
</dbReference>
<dbReference type="InterPro" id="IPR019735">
    <property type="entry name" value="Synapsin_CS"/>
</dbReference>
<dbReference type="InterPro" id="IPR019736">
    <property type="entry name" value="Synapsin_P_site"/>
</dbReference>
<dbReference type="InterPro" id="IPR020897">
    <property type="entry name" value="Synapsin_pre-ATP-grasp_dom"/>
</dbReference>
<dbReference type="PANTHER" id="PTHR10841">
    <property type="entry name" value="SYNAPSIN"/>
    <property type="match status" value="1"/>
</dbReference>
<dbReference type="PANTHER" id="PTHR10841:SF27">
    <property type="entry name" value="SYNAPSIN-3"/>
    <property type="match status" value="1"/>
</dbReference>
<dbReference type="Pfam" id="PF02078">
    <property type="entry name" value="Synapsin"/>
    <property type="match status" value="1"/>
</dbReference>
<dbReference type="Pfam" id="PF02750">
    <property type="entry name" value="Synapsin_C"/>
    <property type="match status" value="1"/>
</dbReference>
<dbReference type="Pfam" id="PF10581">
    <property type="entry name" value="Synapsin_N"/>
    <property type="match status" value="1"/>
</dbReference>
<dbReference type="PRINTS" id="PR01368">
    <property type="entry name" value="SYNAPSIN"/>
</dbReference>
<dbReference type="SUPFAM" id="SSF56059">
    <property type="entry name" value="Glutathione synthetase ATP-binding domain-like"/>
    <property type="match status" value="1"/>
</dbReference>
<dbReference type="SUPFAM" id="SSF52440">
    <property type="entry name" value="PreATP-grasp domain"/>
    <property type="match status" value="1"/>
</dbReference>
<dbReference type="PROSITE" id="PS00415">
    <property type="entry name" value="SYNAPSIN_1"/>
    <property type="match status" value="1"/>
</dbReference>
<dbReference type="PROSITE" id="PS00416">
    <property type="entry name" value="SYNAPSIN_2"/>
    <property type="match status" value="1"/>
</dbReference>
<organism>
    <name type="scientific">Rattus norvegicus</name>
    <name type="common">Rat</name>
    <dbReference type="NCBI Taxonomy" id="10116"/>
    <lineage>
        <taxon>Eukaryota</taxon>
        <taxon>Metazoa</taxon>
        <taxon>Chordata</taxon>
        <taxon>Craniata</taxon>
        <taxon>Vertebrata</taxon>
        <taxon>Euteleostomi</taxon>
        <taxon>Mammalia</taxon>
        <taxon>Eutheria</taxon>
        <taxon>Euarchontoglires</taxon>
        <taxon>Glires</taxon>
        <taxon>Rodentia</taxon>
        <taxon>Myomorpha</taxon>
        <taxon>Muroidea</taxon>
        <taxon>Muridae</taxon>
        <taxon>Murinae</taxon>
        <taxon>Rattus</taxon>
    </lineage>
</organism>
<protein>
    <recommendedName>
        <fullName>Synapsin-3</fullName>
    </recommendedName>
    <alternativeName>
        <fullName>Synapsin III</fullName>
    </alternativeName>
</protein>
<comment type="function">
    <text>May be involved in the regulation of neurotransmitter release and synaptogenesis. Binds ATP with high affinity and ADP with a lower affinity. This is consistent with a catalytic role of the C-domain in which ADP would be dissociated by cellular ATP after bound ATP was hydrolyzed.</text>
</comment>
<comment type="subunit">
    <text evidence="4">Interacts with CAPON.</text>
</comment>
<comment type="subcellular location">
    <subcellularLocation>
        <location>Cytoplasmic vesicle</location>
        <location>Secretory vesicle</location>
        <location>Synaptic vesicle membrane</location>
        <topology>Peripheral membrane protein</topology>
        <orientation>Cytoplasmic side</orientation>
    </subcellularLocation>
    <text>Peripheral membrane protein localized to the cytoplasmic surface of synaptic vesicles.</text>
</comment>
<comment type="tissue specificity">
    <text>Expressed primarily in brain.</text>
</comment>
<comment type="domain">
    <text evidence="1">The A region binds phospholipids with a preference for negatively charged species.</text>
</comment>
<comment type="PTM">
    <text evidence="1">Phosphorylation at Ser-9 dissociates synapsins from synaptic vesicles.</text>
</comment>
<comment type="miscellaneous">
    <text>Regulated by calcium.</text>
</comment>
<comment type="similarity">
    <text evidence="5">Belongs to the synapsin family.</text>
</comment>
<feature type="chain" id="PRO_0000183026" description="Synapsin-3">
    <location>
        <begin position="1"/>
        <end position="579"/>
    </location>
</feature>
<feature type="region of interest" description="A">
    <location>
        <begin position="1"/>
        <end position="28"/>
    </location>
</feature>
<feature type="region of interest" description="Disordered" evidence="3">
    <location>
        <begin position="15"/>
        <end position="84"/>
    </location>
</feature>
<feature type="region of interest" description="B; linker">
    <location>
        <begin position="28"/>
        <end position="90"/>
    </location>
</feature>
<feature type="region of interest" description="C; actin-binding and synaptic-vesicle binding">
    <location>
        <begin position="91"/>
        <end position="398"/>
    </location>
</feature>
<feature type="region of interest" description="J; Pro-rich linker">
    <location>
        <begin position="399"/>
        <end position="530"/>
    </location>
</feature>
<feature type="region of interest" description="Disordered" evidence="3">
    <location>
        <begin position="400"/>
        <end position="566"/>
    </location>
</feature>
<feature type="region of interest" description="E">
    <location>
        <begin position="531"/>
        <end position="579"/>
    </location>
</feature>
<feature type="compositionally biased region" description="Low complexity" evidence="3">
    <location>
        <begin position="30"/>
        <end position="39"/>
    </location>
</feature>
<feature type="compositionally biased region" description="Low complexity" evidence="3">
    <location>
        <begin position="47"/>
        <end position="66"/>
    </location>
</feature>
<feature type="compositionally biased region" description="Low complexity" evidence="3">
    <location>
        <begin position="418"/>
        <end position="431"/>
    </location>
</feature>
<feature type="compositionally biased region" description="Low complexity" evidence="3">
    <location>
        <begin position="453"/>
        <end position="485"/>
    </location>
</feature>
<feature type="compositionally biased region" description="Polar residues" evidence="3">
    <location>
        <begin position="486"/>
        <end position="529"/>
    </location>
</feature>
<feature type="compositionally biased region" description="Low complexity" evidence="3">
    <location>
        <begin position="536"/>
        <end position="549"/>
    </location>
</feature>
<feature type="compositionally biased region" description="Basic and acidic residues" evidence="3">
    <location>
        <begin position="550"/>
        <end position="566"/>
    </location>
</feature>
<feature type="modified residue" description="Phosphoserine; by PKA and CaMK1" evidence="2">
    <location>
        <position position="9"/>
    </location>
</feature>
<feature type="modified residue" description="Phosphoserine" evidence="2">
    <location>
        <position position="454"/>
    </location>
</feature>
<feature type="modified residue" description="Phosphoserine" evidence="6">
    <location>
        <position position="461"/>
    </location>
</feature>
<feature type="modified residue" description="Phosphoserine" evidence="6">
    <location>
        <position position="469"/>
    </location>
</feature>
<feature type="modified residue" description="Phosphoserine" evidence="6">
    <location>
        <position position="474"/>
    </location>
</feature>
<feature type="modified residue" description="Phosphoserine" evidence="6">
    <location>
        <position position="480"/>
    </location>
</feature>
<feature type="modified residue" description="Phosphoserine" evidence="6">
    <location>
        <position position="483"/>
    </location>
</feature>
<feature type="modified residue" description="Phosphoserine" evidence="6">
    <location>
        <position position="540"/>
    </location>
</feature>
<reference key="1">
    <citation type="journal article" date="1998" name="J. Biol. Chem.">
        <title>Synapsin III, a novel synapsin with an unusual regulation by Ca2+.</title>
        <authorList>
            <person name="Hosaka M."/>
            <person name="Suedhof T.C."/>
        </authorList>
    </citation>
    <scope>NUCLEOTIDE SEQUENCE [MRNA]</scope>
    <source>
        <tissue>Brain</tissue>
    </source>
</reference>
<reference key="2">
    <citation type="journal article" date="2002" name="Proc. Natl. Acad. Sci. U.S.A.">
        <title>Neuronal nitric-oxide synthase localization mediated by a ternary complex with synapsin and CAPON.</title>
        <authorList>
            <person name="Jaffrey S.R."/>
            <person name="Benfenati F."/>
            <person name="Snowman A.M."/>
            <person name="Czernik A.J."/>
            <person name="Snyder S.H."/>
        </authorList>
    </citation>
    <scope>INTERACTION WITH CAPON</scope>
</reference>
<reference key="3">
    <citation type="journal article" date="2012" name="Nat. Commun.">
        <title>Quantitative maps of protein phosphorylation sites across 14 different rat organs and tissues.</title>
        <authorList>
            <person name="Lundby A."/>
            <person name="Secher A."/>
            <person name="Lage K."/>
            <person name="Nordsborg N.B."/>
            <person name="Dmytriyev A."/>
            <person name="Lundby C."/>
            <person name="Olsen J.V."/>
        </authorList>
    </citation>
    <scope>PHOSPHORYLATION [LARGE SCALE ANALYSIS] AT SER-461; SER-469; SER-474; SER-480; SER-483 AND SER-540</scope>
    <scope>IDENTIFICATION BY MASS SPECTROMETRY [LARGE SCALE ANALYSIS]</scope>
</reference>
<name>SYN3_RAT</name>
<keyword id="KW-0067">ATP-binding</keyword>
<keyword id="KW-0106">Calcium</keyword>
<keyword id="KW-0968">Cytoplasmic vesicle</keyword>
<keyword id="KW-0472">Membrane</keyword>
<keyword id="KW-0547">Nucleotide-binding</keyword>
<keyword id="KW-0597">Phosphoprotein</keyword>
<keyword id="KW-1185">Reference proteome</keyword>
<keyword id="KW-0770">Synapse</keyword>
<proteinExistence type="evidence at protein level"/>
<evidence type="ECO:0000250" key="1"/>
<evidence type="ECO:0000250" key="2">
    <source>
        <dbReference type="UniProtKB" id="Q8JZP2"/>
    </source>
</evidence>
<evidence type="ECO:0000256" key="3">
    <source>
        <dbReference type="SAM" id="MobiDB-lite"/>
    </source>
</evidence>
<evidence type="ECO:0000269" key="4">
    <source>
    </source>
</evidence>
<evidence type="ECO:0000305" key="5"/>
<evidence type="ECO:0007744" key="6">
    <source>
    </source>
</evidence>